<organism>
    <name type="scientific">Huperzia lucidula</name>
    <name type="common">Shining clubmoss</name>
    <name type="synonym">Lycopodium lucidulum</name>
    <dbReference type="NCBI Taxonomy" id="37429"/>
    <lineage>
        <taxon>Eukaryota</taxon>
        <taxon>Viridiplantae</taxon>
        <taxon>Streptophyta</taxon>
        <taxon>Embryophyta</taxon>
        <taxon>Tracheophyta</taxon>
        <taxon>Lycopodiopsida</taxon>
        <taxon>Lycopodiales</taxon>
        <taxon>Lycopodiaceae</taxon>
        <taxon>Huperzioideae</taxon>
        <taxon>Huperzia</taxon>
    </lineage>
</organism>
<reference key="1">
    <citation type="journal article" date="2005" name="Gene">
        <title>The first complete chloroplast genome sequence of a lycophyte, Huperzia lucidula (Lycopodiaceae).</title>
        <authorList>
            <person name="Wolf P.G."/>
            <person name="Karol K.G."/>
            <person name="Mandoli D.F."/>
            <person name="Kuehl J.V."/>
            <person name="Arumuganathan K."/>
            <person name="Ellis M.W."/>
            <person name="Mishler B.D."/>
            <person name="Kelch D.G."/>
            <person name="Olmstead R.G."/>
            <person name="Boore J.L."/>
        </authorList>
    </citation>
    <scope>NUCLEOTIDE SEQUENCE [LARGE SCALE GENOMIC DNA]</scope>
</reference>
<feature type="chain" id="PRO_0000129679" description="Large ribosomal subunit protein uL2c">
    <location>
        <begin position="1"/>
        <end position="278"/>
    </location>
</feature>
<feature type="region of interest" description="Disordered" evidence="3">
    <location>
        <begin position="224"/>
        <end position="267"/>
    </location>
</feature>
<protein>
    <recommendedName>
        <fullName evidence="2">Large ribosomal subunit protein uL2c</fullName>
    </recommendedName>
    <alternativeName>
        <fullName evidence="4">50S ribosomal protein L2, chloroplastic</fullName>
    </alternativeName>
</protein>
<dbReference type="EMBL" id="AY660566">
    <property type="protein sequence ID" value="AAT80683.1"/>
    <property type="molecule type" value="Genomic_DNA"/>
</dbReference>
<dbReference type="RefSeq" id="YP_209487.1">
    <property type="nucleotide sequence ID" value="NC_006861.1"/>
</dbReference>
<dbReference type="SMR" id="Q5SD13"/>
<dbReference type="GeneID" id="3283812"/>
<dbReference type="GO" id="GO:0009507">
    <property type="term" value="C:chloroplast"/>
    <property type="evidence" value="ECO:0007669"/>
    <property type="project" value="UniProtKB-SubCell"/>
</dbReference>
<dbReference type="GO" id="GO:0005762">
    <property type="term" value="C:mitochondrial large ribosomal subunit"/>
    <property type="evidence" value="ECO:0007669"/>
    <property type="project" value="TreeGrafter"/>
</dbReference>
<dbReference type="GO" id="GO:0019843">
    <property type="term" value="F:rRNA binding"/>
    <property type="evidence" value="ECO:0007669"/>
    <property type="project" value="UniProtKB-UniRule"/>
</dbReference>
<dbReference type="GO" id="GO:0003735">
    <property type="term" value="F:structural constituent of ribosome"/>
    <property type="evidence" value="ECO:0007669"/>
    <property type="project" value="InterPro"/>
</dbReference>
<dbReference type="GO" id="GO:0016740">
    <property type="term" value="F:transferase activity"/>
    <property type="evidence" value="ECO:0007669"/>
    <property type="project" value="InterPro"/>
</dbReference>
<dbReference type="GO" id="GO:0032543">
    <property type="term" value="P:mitochondrial translation"/>
    <property type="evidence" value="ECO:0007669"/>
    <property type="project" value="TreeGrafter"/>
</dbReference>
<dbReference type="FunFam" id="2.30.30.30:FF:000001">
    <property type="entry name" value="50S ribosomal protein L2"/>
    <property type="match status" value="1"/>
</dbReference>
<dbReference type="FunFam" id="4.10.950.10:FF:000001">
    <property type="entry name" value="50S ribosomal protein L2"/>
    <property type="match status" value="1"/>
</dbReference>
<dbReference type="FunFam" id="2.40.50.140:FF:000029">
    <property type="entry name" value="50S ribosomal protein L2, chloroplastic"/>
    <property type="match status" value="1"/>
</dbReference>
<dbReference type="Gene3D" id="2.30.30.30">
    <property type="match status" value="1"/>
</dbReference>
<dbReference type="Gene3D" id="2.40.50.140">
    <property type="entry name" value="Nucleic acid-binding proteins"/>
    <property type="match status" value="1"/>
</dbReference>
<dbReference type="Gene3D" id="4.10.950.10">
    <property type="entry name" value="Ribosomal protein L2, domain 3"/>
    <property type="match status" value="1"/>
</dbReference>
<dbReference type="HAMAP" id="MF_01320_B">
    <property type="entry name" value="Ribosomal_uL2_B"/>
    <property type="match status" value="1"/>
</dbReference>
<dbReference type="InterPro" id="IPR012340">
    <property type="entry name" value="NA-bd_OB-fold"/>
</dbReference>
<dbReference type="InterPro" id="IPR014722">
    <property type="entry name" value="Rib_uL2_dom2"/>
</dbReference>
<dbReference type="InterPro" id="IPR002171">
    <property type="entry name" value="Ribosomal_uL2"/>
</dbReference>
<dbReference type="InterPro" id="IPR005880">
    <property type="entry name" value="Ribosomal_uL2_bac/org-type"/>
</dbReference>
<dbReference type="InterPro" id="IPR022669">
    <property type="entry name" value="Ribosomal_uL2_C"/>
</dbReference>
<dbReference type="InterPro" id="IPR022671">
    <property type="entry name" value="Ribosomal_uL2_CS"/>
</dbReference>
<dbReference type="InterPro" id="IPR014726">
    <property type="entry name" value="Ribosomal_uL2_dom3"/>
</dbReference>
<dbReference type="InterPro" id="IPR022666">
    <property type="entry name" value="Ribosomal_uL2_RNA-bd_dom"/>
</dbReference>
<dbReference type="InterPro" id="IPR008991">
    <property type="entry name" value="Translation_prot_SH3-like_sf"/>
</dbReference>
<dbReference type="NCBIfam" id="TIGR01171">
    <property type="entry name" value="rplB_bact"/>
    <property type="match status" value="1"/>
</dbReference>
<dbReference type="PANTHER" id="PTHR13691:SF5">
    <property type="entry name" value="LARGE RIBOSOMAL SUBUNIT PROTEIN UL2M"/>
    <property type="match status" value="1"/>
</dbReference>
<dbReference type="PANTHER" id="PTHR13691">
    <property type="entry name" value="RIBOSOMAL PROTEIN L2"/>
    <property type="match status" value="1"/>
</dbReference>
<dbReference type="Pfam" id="PF00181">
    <property type="entry name" value="Ribosomal_L2"/>
    <property type="match status" value="1"/>
</dbReference>
<dbReference type="Pfam" id="PF03947">
    <property type="entry name" value="Ribosomal_L2_C"/>
    <property type="match status" value="1"/>
</dbReference>
<dbReference type="PIRSF" id="PIRSF002158">
    <property type="entry name" value="Ribosomal_L2"/>
    <property type="match status" value="1"/>
</dbReference>
<dbReference type="SMART" id="SM01383">
    <property type="entry name" value="Ribosomal_L2"/>
    <property type="match status" value="1"/>
</dbReference>
<dbReference type="SMART" id="SM01382">
    <property type="entry name" value="Ribosomal_L2_C"/>
    <property type="match status" value="1"/>
</dbReference>
<dbReference type="SUPFAM" id="SSF50249">
    <property type="entry name" value="Nucleic acid-binding proteins"/>
    <property type="match status" value="1"/>
</dbReference>
<dbReference type="SUPFAM" id="SSF50104">
    <property type="entry name" value="Translation proteins SH3-like domain"/>
    <property type="match status" value="1"/>
</dbReference>
<dbReference type="PROSITE" id="PS00467">
    <property type="entry name" value="RIBOSOMAL_L2"/>
    <property type="match status" value="1"/>
</dbReference>
<keyword id="KW-0150">Chloroplast</keyword>
<keyword id="KW-0934">Plastid</keyword>
<keyword id="KW-0687">Ribonucleoprotein</keyword>
<keyword id="KW-0689">Ribosomal protein</keyword>
<sequence>MAIRFYRDYTPGARDRLVVSSSEGTVRFKPQKKLISGFTCRKGRNNRGIITSRHRGGGHKRLYRQIDFRRSKRGISGRIVTVEYDPNRNAYICLVHYEDGEKKYILHPGGIKIGDTIISGPMATILIGNALPLTNMPLGTTIHNVEITPGRGGQLARAAGTAAKLIAKEGRLATSRLPSGEVRLISQNCLATVGQVGNVDDNNRTLGKAGSKRWLGKRPKVRGVVMNPVDHPHGGGEGRAPIGRKKPLTPWGHTALGGRSRKNHKYSDTLILRRRRNS</sequence>
<comment type="subunit">
    <text evidence="1">Part of the 50S ribosomal subunit.</text>
</comment>
<comment type="subcellular location">
    <subcellularLocation>
        <location>Plastid</location>
        <location>Chloroplast</location>
    </subcellularLocation>
</comment>
<comment type="similarity">
    <text evidence="4">Belongs to the universal ribosomal protein uL2 family.</text>
</comment>
<geneLocation type="chloroplast"/>
<proteinExistence type="inferred from homology"/>
<evidence type="ECO:0000250" key="1"/>
<evidence type="ECO:0000255" key="2">
    <source>
        <dbReference type="HAMAP-Rule" id="MF_01320"/>
    </source>
</evidence>
<evidence type="ECO:0000256" key="3">
    <source>
        <dbReference type="SAM" id="MobiDB-lite"/>
    </source>
</evidence>
<evidence type="ECO:0000305" key="4"/>
<gene>
    <name type="primary">rpl2</name>
</gene>
<name>RK2_HUPLU</name>
<accession>Q5SD13</accession>